<evidence type="ECO:0000250" key="1">
    <source>
        <dbReference type="UniProtKB" id="P67812"/>
    </source>
</evidence>
<evidence type="ECO:0000250" key="2">
    <source>
        <dbReference type="UniProtKB" id="Q12133"/>
    </source>
</evidence>
<evidence type="ECO:0000255" key="3"/>
<evidence type="ECO:0000269" key="4">
    <source>
    </source>
</evidence>
<evidence type="ECO:0000305" key="5"/>
<proteinExistence type="inferred from homology"/>
<sequence>MIVDTFTNRGSTFFSKLSTVLFFLCAVITFQGVIQRREVELDTPVYVHYAKYRSARFYHAFRNVRQQYAQVKFNMDADLSELWDWNTKHVVVYLVASYSTEKHEKNQVVVWDKILSSPEESKMFMKDTLSNIQAHPFNEYSNQFEGKNATYTLHWTVSPKMGFLSWGAGPGSYEIPFHKIITQPK</sequence>
<feature type="chain" id="PRO_0000218949" description="Signal peptidase complex subunit 3">
    <location>
        <begin position="1"/>
        <end position="185"/>
    </location>
</feature>
<feature type="topological domain" description="Cytoplasmic" evidence="3">
    <location>
        <begin position="1"/>
        <end position="12"/>
    </location>
</feature>
<feature type="transmembrane region" description="Helical; Signal-anchor for type II membrane protein" evidence="3">
    <location>
        <begin position="13"/>
        <end position="34"/>
    </location>
</feature>
<feature type="topological domain" description="Lumenal" evidence="3">
    <location>
        <begin position="35"/>
        <end position="185"/>
    </location>
</feature>
<feature type="glycosylation site" description="N-linked (GlcNAc...) asparagine" evidence="3">
    <location>
        <position position="148"/>
    </location>
</feature>
<keyword id="KW-0256">Endoplasmic reticulum</keyword>
<keyword id="KW-0325">Glycoprotein</keyword>
<keyword id="KW-0472">Membrane</keyword>
<keyword id="KW-1185">Reference proteome</keyword>
<keyword id="KW-0735">Signal-anchor</keyword>
<keyword id="KW-0812">Transmembrane</keyword>
<keyword id="KW-1133">Transmembrane helix</keyword>
<protein>
    <recommendedName>
        <fullName>Signal peptidase complex subunit 3</fullName>
    </recommendedName>
    <alternativeName>
        <fullName>Microsomal signal peptidase subunit 3</fullName>
    </alternativeName>
</protein>
<reference key="1">
    <citation type="journal article" date="2002" name="Nature">
        <title>The genome sequence of Schizosaccharomyces pombe.</title>
        <authorList>
            <person name="Wood V."/>
            <person name="Gwilliam R."/>
            <person name="Rajandream M.A."/>
            <person name="Lyne M.H."/>
            <person name="Lyne R."/>
            <person name="Stewart A."/>
            <person name="Sgouros J.G."/>
            <person name="Peat N."/>
            <person name="Hayles J."/>
            <person name="Baker S.G."/>
            <person name="Basham D."/>
            <person name="Bowman S."/>
            <person name="Brooks K."/>
            <person name="Brown D."/>
            <person name="Brown S."/>
            <person name="Chillingworth T."/>
            <person name="Churcher C.M."/>
            <person name="Collins M."/>
            <person name="Connor R."/>
            <person name="Cronin A."/>
            <person name="Davis P."/>
            <person name="Feltwell T."/>
            <person name="Fraser A."/>
            <person name="Gentles S."/>
            <person name="Goble A."/>
            <person name="Hamlin N."/>
            <person name="Harris D.E."/>
            <person name="Hidalgo J."/>
            <person name="Hodgson G."/>
            <person name="Holroyd S."/>
            <person name="Hornsby T."/>
            <person name="Howarth S."/>
            <person name="Huckle E.J."/>
            <person name="Hunt S."/>
            <person name="Jagels K."/>
            <person name="James K.D."/>
            <person name="Jones L."/>
            <person name="Jones M."/>
            <person name="Leather S."/>
            <person name="McDonald S."/>
            <person name="McLean J."/>
            <person name="Mooney P."/>
            <person name="Moule S."/>
            <person name="Mungall K.L."/>
            <person name="Murphy L.D."/>
            <person name="Niblett D."/>
            <person name="Odell C."/>
            <person name="Oliver K."/>
            <person name="O'Neil S."/>
            <person name="Pearson D."/>
            <person name="Quail M.A."/>
            <person name="Rabbinowitsch E."/>
            <person name="Rutherford K.M."/>
            <person name="Rutter S."/>
            <person name="Saunders D."/>
            <person name="Seeger K."/>
            <person name="Sharp S."/>
            <person name="Skelton J."/>
            <person name="Simmonds M.N."/>
            <person name="Squares R."/>
            <person name="Squares S."/>
            <person name="Stevens K."/>
            <person name="Taylor K."/>
            <person name="Taylor R.G."/>
            <person name="Tivey A."/>
            <person name="Walsh S.V."/>
            <person name="Warren T."/>
            <person name="Whitehead S."/>
            <person name="Woodward J.R."/>
            <person name="Volckaert G."/>
            <person name="Aert R."/>
            <person name="Robben J."/>
            <person name="Grymonprez B."/>
            <person name="Weltjens I."/>
            <person name="Vanstreels E."/>
            <person name="Rieger M."/>
            <person name="Schaefer M."/>
            <person name="Mueller-Auer S."/>
            <person name="Gabel C."/>
            <person name="Fuchs M."/>
            <person name="Duesterhoeft A."/>
            <person name="Fritzc C."/>
            <person name="Holzer E."/>
            <person name="Moestl D."/>
            <person name="Hilbert H."/>
            <person name="Borzym K."/>
            <person name="Langer I."/>
            <person name="Beck A."/>
            <person name="Lehrach H."/>
            <person name="Reinhardt R."/>
            <person name="Pohl T.M."/>
            <person name="Eger P."/>
            <person name="Zimmermann W."/>
            <person name="Wedler H."/>
            <person name="Wambutt R."/>
            <person name="Purnelle B."/>
            <person name="Goffeau A."/>
            <person name="Cadieu E."/>
            <person name="Dreano S."/>
            <person name="Gloux S."/>
            <person name="Lelaure V."/>
            <person name="Mottier S."/>
            <person name="Galibert F."/>
            <person name="Aves S.J."/>
            <person name="Xiang Z."/>
            <person name="Hunt C."/>
            <person name="Moore K."/>
            <person name="Hurst S.M."/>
            <person name="Lucas M."/>
            <person name="Rochet M."/>
            <person name="Gaillardin C."/>
            <person name="Tallada V.A."/>
            <person name="Garzon A."/>
            <person name="Thode G."/>
            <person name="Daga R.R."/>
            <person name="Cruzado L."/>
            <person name="Jimenez J."/>
            <person name="Sanchez M."/>
            <person name="del Rey F."/>
            <person name="Benito J."/>
            <person name="Dominguez A."/>
            <person name="Revuelta J.L."/>
            <person name="Moreno S."/>
            <person name="Armstrong J."/>
            <person name="Forsburg S.L."/>
            <person name="Cerutti L."/>
            <person name="Lowe T."/>
            <person name="McCombie W.R."/>
            <person name="Paulsen I."/>
            <person name="Potashkin J."/>
            <person name="Shpakovski G.V."/>
            <person name="Ussery D."/>
            <person name="Barrell B.G."/>
            <person name="Nurse P."/>
        </authorList>
    </citation>
    <scope>NUCLEOTIDE SEQUENCE [LARGE SCALE GENOMIC DNA]</scope>
    <source>
        <strain>972 / ATCC 24843</strain>
    </source>
</reference>
<reference key="2">
    <citation type="journal article" date="2006" name="Nat. Biotechnol.">
        <title>ORFeome cloning and global analysis of protein localization in the fission yeast Schizosaccharomyces pombe.</title>
        <authorList>
            <person name="Matsuyama A."/>
            <person name="Arai R."/>
            <person name="Yashiroda Y."/>
            <person name="Shirai A."/>
            <person name="Kamata A."/>
            <person name="Sekido S."/>
            <person name="Kobayashi Y."/>
            <person name="Hashimoto A."/>
            <person name="Hamamoto M."/>
            <person name="Hiraoka Y."/>
            <person name="Horinouchi S."/>
            <person name="Yoshida M."/>
        </authorList>
    </citation>
    <scope>SUBCELLULAR LOCATION [LARGE SCALE ANALYSIS]</scope>
</reference>
<dbReference type="EMBL" id="CU329670">
    <property type="protein sequence ID" value="CAA93582.1"/>
    <property type="molecule type" value="Genomic_DNA"/>
</dbReference>
<dbReference type="PIR" id="T38921">
    <property type="entry name" value="T38921"/>
</dbReference>
<dbReference type="RefSeq" id="NP_593225.1">
    <property type="nucleotide sequence ID" value="NM_001018622.2"/>
</dbReference>
<dbReference type="SMR" id="Q10259"/>
<dbReference type="FunCoup" id="Q10259">
    <property type="interactions" value="219"/>
</dbReference>
<dbReference type="STRING" id="284812.Q10259"/>
<dbReference type="MEROPS" id="X45.001"/>
<dbReference type="GlyCosmos" id="Q10259">
    <property type="glycosylation" value="1 site, No reported glycans"/>
</dbReference>
<dbReference type="iPTMnet" id="Q10259"/>
<dbReference type="PaxDb" id="4896-SPAC56F8.11.1"/>
<dbReference type="EnsemblFungi" id="SPAC56F8.11.1">
    <property type="protein sequence ID" value="SPAC56F8.11.1:pep"/>
    <property type="gene ID" value="SPAC56F8.11"/>
</dbReference>
<dbReference type="GeneID" id="2543318"/>
<dbReference type="KEGG" id="spo:2543318"/>
<dbReference type="PomBase" id="SPAC56F8.11">
    <property type="gene designation" value="spc3"/>
</dbReference>
<dbReference type="VEuPathDB" id="FungiDB:SPAC56F8.11"/>
<dbReference type="eggNOG" id="KOG3372">
    <property type="taxonomic scope" value="Eukaryota"/>
</dbReference>
<dbReference type="HOGENOM" id="CLU_068714_2_1_1"/>
<dbReference type="InParanoid" id="Q10259"/>
<dbReference type="OMA" id="LAIMCIM"/>
<dbReference type="PhylomeDB" id="Q10259"/>
<dbReference type="BRENDA" id="3.4.21.89">
    <property type="organism ID" value="5613"/>
</dbReference>
<dbReference type="PRO" id="PR:Q10259"/>
<dbReference type="Proteomes" id="UP000002485">
    <property type="component" value="Chromosome I"/>
</dbReference>
<dbReference type="GO" id="GO:0005783">
    <property type="term" value="C:endoplasmic reticulum"/>
    <property type="evidence" value="ECO:0007005"/>
    <property type="project" value="PomBase"/>
</dbReference>
<dbReference type="GO" id="GO:0005787">
    <property type="term" value="C:signal peptidase complex"/>
    <property type="evidence" value="ECO:0000318"/>
    <property type="project" value="GO_Central"/>
</dbReference>
<dbReference type="GO" id="GO:0045047">
    <property type="term" value="P:protein targeting to ER"/>
    <property type="evidence" value="ECO:0000318"/>
    <property type="project" value="GO_Central"/>
</dbReference>
<dbReference type="GO" id="GO:0006465">
    <property type="term" value="P:signal peptide processing"/>
    <property type="evidence" value="ECO:0000318"/>
    <property type="project" value="GO_Central"/>
</dbReference>
<dbReference type="InterPro" id="IPR007653">
    <property type="entry name" value="SPC3"/>
</dbReference>
<dbReference type="PANTHER" id="PTHR12804">
    <property type="entry name" value="MICROSOMAL SIGNAL PEPTIDASE 23 KD SUBUNIT SPC22/23"/>
    <property type="match status" value="1"/>
</dbReference>
<dbReference type="PANTHER" id="PTHR12804:SF0">
    <property type="entry name" value="SIGNAL PEPTIDASE COMPLEX SUBUNIT 3"/>
    <property type="match status" value="1"/>
</dbReference>
<dbReference type="Pfam" id="PF04573">
    <property type="entry name" value="SPC22"/>
    <property type="match status" value="1"/>
</dbReference>
<dbReference type="PIRSF" id="PIRSF016089">
    <property type="entry name" value="SPC22"/>
    <property type="match status" value="1"/>
</dbReference>
<organism>
    <name type="scientific">Schizosaccharomyces pombe (strain 972 / ATCC 24843)</name>
    <name type="common">Fission yeast</name>
    <dbReference type="NCBI Taxonomy" id="284812"/>
    <lineage>
        <taxon>Eukaryota</taxon>
        <taxon>Fungi</taxon>
        <taxon>Dikarya</taxon>
        <taxon>Ascomycota</taxon>
        <taxon>Taphrinomycotina</taxon>
        <taxon>Schizosaccharomycetes</taxon>
        <taxon>Schizosaccharomycetales</taxon>
        <taxon>Schizosaccharomycetaceae</taxon>
        <taxon>Schizosaccharomyces</taxon>
    </lineage>
</organism>
<name>SPC3_SCHPO</name>
<comment type="function">
    <text evidence="2">Essential component of the signal peptidase complex (SPC) which catalyzes the cleavage of N-terminal signal sequences from nascent proteins as they are translocated into the lumen of the endoplasmic reticulum. Essential for the SPC catalytic activity, possibly by stabilizing and positioning the active center of the complex close to the lumenal surface. Essential for viability.</text>
</comment>
<comment type="subunit">
    <text evidence="1 2">Component of the signal peptidase complex (SPC) composed of a catalytic subunit sec11 and three accessory subunits spc1, spc2 and spc3 (By similarity). The complex induces a local thinning of the ER membrane which is used to measure the length of the signal peptide (SP) h-region of protein substrates. This ensures the selectivity of the complex towards h-regions shorter than 18-20 amino acids (By similarity). SPC associates with the translocon complex (By similarity).</text>
</comment>
<comment type="subcellular location">
    <subcellularLocation>
        <location evidence="4">Endoplasmic reticulum membrane</location>
        <topology evidence="4">Single-pass type II membrane protein</topology>
    </subcellularLocation>
</comment>
<comment type="similarity">
    <text evidence="5">Belongs to the SPCS3 family.</text>
</comment>
<accession>Q10259</accession>
<gene>
    <name type="primary">spc3</name>
    <name type="ORF">SPAC56F8.11</name>
</gene>